<proteinExistence type="evidence at transcript level"/>
<reference key="1">
    <citation type="journal article" date="2000" name="Plant Physiol.">
        <title>Differential screening indicates a dramatic change in mRNA profiles during grape berry ripening. Cloning and characterization of cDNAs encoding putative cell wall and stress response proteins.</title>
        <authorList>
            <person name="Davies C."/>
            <person name="Robinson S.P."/>
        </authorList>
    </citation>
    <scope>NUCLEOTIDE SEQUENCE [MRNA]</scope>
    <scope>TISSUE SPECIFICITY</scope>
    <source>
        <strain>cv. Shiraz</strain>
        <tissue>Fruit</tissue>
    </source>
</reference>
<keyword id="KW-0964">Secreted</keyword>
<keyword id="KW-0732">Signal</keyword>
<sequence length="220" mass="22886">MAKSALVWLASVCLVFNILSLPFLALGLSSCGGSCQTLNDYEGQLICINGECNDDPEVGTHICGGNSSTPSPPPPSTCQPSGTLACKGGKPKNTYTCSPPITSSTPAVLTNNNFEKGGDGGGPSACDNKYHDNSERIVALSTGWYNGGSRCGKMIRITAQNGRSVLAKVVDECDSMHGCDKEHAGQPPCDNNIVDGSNAVWNALGLDINIGEVDVTWSMA</sequence>
<accession>Q9M4H4</accession>
<name>GRI22_VITVI</name>
<dbReference type="EMBL" id="AJ237989">
    <property type="protein sequence ID" value="CAB85629.1"/>
    <property type="molecule type" value="mRNA"/>
</dbReference>
<dbReference type="RefSeq" id="NP_001268052.1">
    <property type="nucleotide sequence ID" value="NM_001281123.1"/>
</dbReference>
<dbReference type="SMR" id="Q9M4H4"/>
<dbReference type="PaxDb" id="29760-VIT_06s0004g02560.t01"/>
<dbReference type="GeneID" id="100233091"/>
<dbReference type="KEGG" id="vvi:100233091"/>
<dbReference type="eggNOG" id="ENOG502RXVH">
    <property type="taxonomic scope" value="Eukaryota"/>
</dbReference>
<dbReference type="OrthoDB" id="372427at71240"/>
<dbReference type="ExpressionAtlas" id="Q9M4H4">
    <property type="expression patterns" value="baseline and differential"/>
</dbReference>
<dbReference type="GO" id="GO:0005576">
    <property type="term" value="C:extracellular region"/>
    <property type="evidence" value="ECO:0007669"/>
    <property type="project" value="UniProtKB-SubCell"/>
</dbReference>
<dbReference type="CDD" id="cd22270">
    <property type="entry name" value="DPBB_kiwellin-like"/>
    <property type="match status" value="1"/>
</dbReference>
<dbReference type="Gene3D" id="2.40.40.10">
    <property type="entry name" value="RlpA-like domain"/>
    <property type="match status" value="1"/>
</dbReference>
<dbReference type="InterPro" id="IPR039271">
    <property type="entry name" value="Kiwellin-like"/>
</dbReference>
<dbReference type="InterPro" id="IPR036908">
    <property type="entry name" value="RlpA-like_sf"/>
</dbReference>
<dbReference type="PANTHER" id="PTHR33191">
    <property type="entry name" value="RIPENING-RELATED PROTEIN 2-RELATED"/>
    <property type="match status" value="1"/>
</dbReference>
<dbReference type="PANTHER" id="PTHR33191:SF9">
    <property type="entry name" value="RIPENING-RELATED PROTEIN 2-RELATED"/>
    <property type="match status" value="1"/>
</dbReference>
<dbReference type="Pfam" id="PF24300">
    <property type="entry name" value="KWL1"/>
    <property type="match status" value="1"/>
</dbReference>
<dbReference type="SUPFAM" id="SSF50685">
    <property type="entry name" value="Barwin-like endoglucanases"/>
    <property type="match status" value="1"/>
</dbReference>
<protein>
    <recommendedName>
        <fullName>Ripening-related protein grip22</fullName>
    </recommendedName>
</protein>
<organism>
    <name type="scientific">Vitis vinifera</name>
    <name type="common">Grape</name>
    <dbReference type="NCBI Taxonomy" id="29760"/>
    <lineage>
        <taxon>Eukaryota</taxon>
        <taxon>Viridiplantae</taxon>
        <taxon>Streptophyta</taxon>
        <taxon>Embryophyta</taxon>
        <taxon>Tracheophyta</taxon>
        <taxon>Spermatophyta</taxon>
        <taxon>Magnoliopsida</taxon>
        <taxon>eudicotyledons</taxon>
        <taxon>Gunneridae</taxon>
        <taxon>Pentapetalae</taxon>
        <taxon>rosids</taxon>
        <taxon>Vitales</taxon>
        <taxon>Vitaceae</taxon>
        <taxon>Viteae</taxon>
        <taxon>Vitis</taxon>
    </lineage>
</organism>
<feature type="signal peptide" evidence="1">
    <location>
        <begin position="1"/>
        <end position="27"/>
    </location>
</feature>
<feature type="chain" id="PRO_0000045797" description="Ripening-related protein grip22">
    <location>
        <begin position="28"/>
        <end position="220"/>
    </location>
</feature>
<comment type="subcellular location">
    <subcellularLocation>
        <location evidence="3">Secreted</location>
    </subcellularLocation>
</comment>
<comment type="tissue specificity">
    <text evidence="2">Expressed in ripening fruits.</text>
</comment>
<comment type="similarity">
    <text evidence="3">Belongs to the kiwellin family.</text>
</comment>
<gene>
    <name type="primary">grip22</name>
</gene>
<evidence type="ECO:0000255" key="1"/>
<evidence type="ECO:0000269" key="2">
    <source>
    </source>
</evidence>
<evidence type="ECO:0000305" key="3"/>